<gene>
    <name evidence="1" type="primary">hemE</name>
    <name type="ordered locus">Veis_0010</name>
</gene>
<reference key="1">
    <citation type="submission" date="2006-12" db="EMBL/GenBank/DDBJ databases">
        <title>Complete sequence of chromosome 1 of Verminephrobacter eiseniae EF01-2.</title>
        <authorList>
            <person name="Copeland A."/>
            <person name="Lucas S."/>
            <person name="Lapidus A."/>
            <person name="Barry K."/>
            <person name="Detter J.C."/>
            <person name="Glavina del Rio T."/>
            <person name="Dalin E."/>
            <person name="Tice H."/>
            <person name="Pitluck S."/>
            <person name="Chertkov O."/>
            <person name="Brettin T."/>
            <person name="Bruce D."/>
            <person name="Han C."/>
            <person name="Tapia R."/>
            <person name="Gilna P."/>
            <person name="Schmutz J."/>
            <person name="Larimer F."/>
            <person name="Land M."/>
            <person name="Hauser L."/>
            <person name="Kyrpides N."/>
            <person name="Kim E."/>
            <person name="Stahl D."/>
            <person name="Richardson P."/>
        </authorList>
    </citation>
    <scope>NUCLEOTIDE SEQUENCE [LARGE SCALE GENOMIC DNA]</scope>
    <source>
        <strain>EF01-2</strain>
    </source>
</reference>
<name>DCUP_VEREI</name>
<proteinExistence type="inferred from homology"/>
<organism>
    <name type="scientific">Verminephrobacter eiseniae (strain EF01-2)</name>
    <dbReference type="NCBI Taxonomy" id="391735"/>
    <lineage>
        <taxon>Bacteria</taxon>
        <taxon>Pseudomonadati</taxon>
        <taxon>Pseudomonadota</taxon>
        <taxon>Betaproteobacteria</taxon>
        <taxon>Burkholderiales</taxon>
        <taxon>Comamonadaceae</taxon>
        <taxon>Verminephrobacter</taxon>
    </lineage>
</organism>
<dbReference type="EC" id="4.1.1.37" evidence="1"/>
<dbReference type="EMBL" id="CP000542">
    <property type="protein sequence ID" value="ABM55803.1"/>
    <property type="molecule type" value="Genomic_DNA"/>
</dbReference>
<dbReference type="RefSeq" id="WP_011807822.1">
    <property type="nucleotide sequence ID" value="NC_008786.1"/>
</dbReference>
<dbReference type="SMR" id="A1WDU6"/>
<dbReference type="STRING" id="391735.Veis_0010"/>
<dbReference type="GeneID" id="76458768"/>
<dbReference type="KEGG" id="vei:Veis_0010"/>
<dbReference type="eggNOG" id="COG0407">
    <property type="taxonomic scope" value="Bacteria"/>
</dbReference>
<dbReference type="HOGENOM" id="CLU_040933_0_0_4"/>
<dbReference type="OrthoDB" id="9806656at2"/>
<dbReference type="UniPathway" id="UPA00251">
    <property type="reaction ID" value="UER00321"/>
</dbReference>
<dbReference type="Proteomes" id="UP000000374">
    <property type="component" value="Chromosome"/>
</dbReference>
<dbReference type="GO" id="GO:0005829">
    <property type="term" value="C:cytosol"/>
    <property type="evidence" value="ECO:0007669"/>
    <property type="project" value="TreeGrafter"/>
</dbReference>
<dbReference type="GO" id="GO:0004853">
    <property type="term" value="F:uroporphyrinogen decarboxylase activity"/>
    <property type="evidence" value="ECO:0007669"/>
    <property type="project" value="UniProtKB-UniRule"/>
</dbReference>
<dbReference type="GO" id="GO:0019353">
    <property type="term" value="P:protoporphyrinogen IX biosynthetic process from glutamate"/>
    <property type="evidence" value="ECO:0007669"/>
    <property type="project" value="TreeGrafter"/>
</dbReference>
<dbReference type="CDD" id="cd00717">
    <property type="entry name" value="URO-D"/>
    <property type="match status" value="1"/>
</dbReference>
<dbReference type="FunFam" id="3.20.20.210:FF:000001">
    <property type="entry name" value="Uroporphyrinogen decarboxylase"/>
    <property type="match status" value="1"/>
</dbReference>
<dbReference type="Gene3D" id="3.20.20.210">
    <property type="match status" value="1"/>
</dbReference>
<dbReference type="HAMAP" id="MF_00218">
    <property type="entry name" value="URO_D"/>
    <property type="match status" value="1"/>
</dbReference>
<dbReference type="InterPro" id="IPR038071">
    <property type="entry name" value="UROD/MetE-like_sf"/>
</dbReference>
<dbReference type="InterPro" id="IPR006361">
    <property type="entry name" value="Uroporphyrinogen_deCO2ase_HemE"/>
</dbReference>
<dbReference type="InterPro" id="IPR000257">
    <property type="entry name" value="Uroporphyrinogen_deCOase"/>
</dbReference>
<dbReference type="NCBIfam" id="TIGR01464">
    <property type="entry name" value="hemE"/>
    <property type="match status" value="1"/>
</dbReference>
<dbReference type="PANTHER" id="PTHR21091">
    <property type="entry name" value="METHYLTETRAHYDROFOLATE:HOMOCYSTEINE METHYLTRANSFERASE RELATED"/>
    <property type="match status" value="1"/>
</dbReference>
<dbReference type="PANTHER" id="PTHR21091:SF169">
    <property type="entry name" value="UROPORPHYRINOGEN DECARBOXYLASE"/>
    <property type="match status" value="1"/>
</dbReference>
<dbReference type="Pfam" id="PF01208">
    <property type="entry name" value="URO-D"/>
    <property type="match status" value="1"/>
</dbReference>
<dbReference type="SUPFAM" id="SSF51726">
    <property type="entry name" value="UROD/MetE-like"/>
    <property type="match status" value="1"/>
</dbReference>
<dbReference type="PROSITE" id="PS00906">
    <property type="entry name" value="UROD_1"/>
    <property type="match status" value="1"/>
</dbReference>
<dbReference type="PROSITE" id="PS00907">
    <property type="entry name" value="UROD_2"/>
    <property type="match status" value="1"/>
</dbReference>
<comment type="function">
    <text evidence="1">Catalyzes the decarboxylation of four acetate groups of uroporphyrinogen-III to yield coproporphyrinogen-III.</text>
</comment>
<comment type="catalytic activity">
    <reaction evidence="1">
        <text>uroporphyrinogen III + 4 H(+) = coproporphyrinogen III + 4 CO2</text>
        <dbReference type="Rhea" id="RHEA:19865"/>
        <dbReference type="ChEBI" id="CHEBI:15378"/>
        <dbReference type="ChEBI" id="CHEBI:16526"/>
        <dbReference type="ChEBI" id="CHEBI:57308"/>
        <dbReference type="ChEBI" id="CHEBI:57309"/>
        <dbReference type="EC" id="4.1.1.37"/>
    </reaction>
</comment>
<comment type="pathway">
    <text evidence="1">Porphyrin-containing compound metabolism; protoporphyrin-IX biosynthesis; coproporphyrinogen-III from 5-aminolevulinate: step 4/4.</text>
</comment>
<comment type="subunit">
    <text evidence="1">Homodimer.</text>
</comment>
<comment type="subcellular location">
    <subcellularLocation>
        <location evidence="1">Cytoplasm</location>
    </subcellularLocation>
</comment>
<comment type="similarity">
    <text evidence="1">Belongs to the uroporphyrinogen decarboxylase family.</text>
</comment>
<accession>A1WDU6</accession>
<feature type="chain" id="PRO_1000023995" description="Uroporphyrinogen decarboxylase">
    <location>
        <begin position="1"/>
        <end position="370"/>
    </location>
</feature>
<feature type="binding site" evidence="1">
    <location>
        <begin position="29"/>
        <end position="33"/>
    </location>
    <ligand>
        <name>substrate</name>
    </ligand>
</feature>
<feature type="binding site" evidence="1">
    <location>
        <position position="79"/>
    </location>
    <ligand>
        <name>substrate</name>
    </ligand>
</feature>
<feature type="binding site" evidence="1">
    <location>
        <position position="155"/>
    </location>
    <ligand>
        <name>substrate</name>
    </ligand>
</feature>
<feature type="binding site" evidence="1">
    <location>
        <position position="210"/>
    </location>
    <ligand>
        <name>substrate</name>
    </ligand>
</feature>
<feature type="binding site" evidence="1">
    <location>
        <position position="342"/>
    </location>
    <ligand>
        <name>substrate</name>
    </ligand>
</feature>
<feature type="site" description="Transition state stabilizer" evidence="1">
    <location>
        <position position="79"/>
    </location>
</feature>
<evidence type="ECO:0000255" key="1">
    <source>
        <dbReference type="HAMAP-Rule" id="MF_00218"/>
    </source>
</evidence>
<protein>
    <recommendedName>
        <fullName evidence="1">Uroporphyrinogen decarboxylase</fullName>
        <shortName evidence="1">UPD</shortName>
        <shortName evidence="1">URO-D</shortName>
        <ecNumber evidence="1">4.1.1.37</ecNumber>
    </recommendedName>
</protein>
<sequence>MPFAPLANDSFLRACRRQATDYTPLWLMRQAGRYLPEYQASRARAGSFMGLATSVDYATEVTLQPLERFPLDAAILFSDILTVPDAMGLGLSFAEGEGPRLAKVVRDEATVAALAVPDMARLRYVFDAVASIRRALNGRVPLIGFSGSPWTLACYMVEGRGSDDYRLVKGLMYSRPDLMHRILAINADTVAAYLNAQIDAGAQAVMVFDSWGGVLADGAFQAFSLAYTARVLAQLQRTGVDGSDVPRIVFTKGGAPWLQDMQSLDCQVLGLDWTANLASARALVGGAVGGPGKALQGNIDPHVLLAPPARIVQQVQQVLDSFGPPHTDRSTTGPTHIFNLGHGISQFTPPAHVAALVEAVHSYSRAQRQG</sequence>
<keyword id="KW-0963">Cytoplasm</keyword>
<keyword id="KW-0210">Decarboxylase</keyword>
<keyword id="KW-0456">Lyase</keyword>
<keyword id="KW-0627">Porphyrin biosynthesis</keyword>
<keyword id="KW-1185">Reference proteome</keyword>